<dbReference type="SMR" id="P0C1F3"/>
<dbReference type="GO" id="GO:0005576">
    <property type="term" value="C:extracellular region"/>
    <property type="evidence" value="ECO:0007669"/>
    <property type="project" value="UniProtKB-SubCell"/>
</dbReference>
<dbReference type="GO" id="GO:0017080">
    <property type="term" value="F:sodium channel regulator activity"/>
    <property type="evidence" value="ECO:0007669"/>
    <property type="project" value="UniProtKB-KW"/>
</dbReference>
<dbReference type="GO" id="GO:0090729">
    <property type="term" value="F:toxin activity"/>
    <property type="evidence" value="ECO:0007669"/>
    <property type="project" value="UniProtKB-KW"/>
</dbReference>
<dbReference type="GO" id="GO:0009966">
    <property type="term" value="P:regulation of signal transduction"/>
    <property type="evidence" value="ECO:0007669"/>
    <property type="project" value="InterPro"/>
</dbReference>
<dbReference type="Gene3D" id="2.20.20.10">
    <property type="entry name" value="Anthopleurin-A"/>
    <property type="match status" value="1"/>
</dbReference>
<dbReference type="InterPro" id="IPR000693">
    <property type="entry name" value="Anenome_toxin"/>
</dbReference>
<dbReference type="InterPro" id="IPR023355">
    <property type="entry name" value="Myo_ane_neurotoxin_sf"/>
</dbReference>
<dbReference type="Pfam" id="PF00706">
    <property type="entry name" value="Toxin_4"/>
    <property type="match status" value="1"/>
</dbReference>
<dbReference type="PIRSF" id="PIRSF001905">
    <property type="entry name" value="Anenome_toxin"/>
    <property type="match status" value="1"/>
</dbReference>
<dbReference type="SUPFAM" id="SSF57392">
    <property type="entry name" value="Defensin-like"/>
    <property type="match status" value="1"/>
</dbReference>
<protein>
    <recommendedName>
        <fullName evidence="5">Delta-actitoxin-Ael1d</fullName>
        <shortName evidence="5">Delta-AITX-Ael1d</shortName>
    </recommendedName>
    <alternativeName>
        <fullName evidence="4">Toxin APE 2-2</fullName>
    </alternativeName>
</protein>
<reference key="1">
    <citation type="journal article" date="2001" name="Toxicon">
        <title>Isolation and characterisation of five neurotoxic and cardiotoxic polypeptides from the sea anemone Anthopleura elegantissima.</title>
        <authorList>
            <person name="Bruhn T."/>
            <person name="Schaller C."/>
            <person name="Schulze C."/>
            <person name="Sanchez-Rodriguez J."/>
            <person name="Dannmeier C."/>
            <person name="Ravens U."/>
            <person name="Heubach J.F."/>
            <person name="Eckhardt K."/>
            <person name="Schmidtmayer J."/>
            <person name="Schmidt H."/>
            <person name="Aneiros A."/>
            <person name="Wachter E."/>
            <person name="Beress L."/>
        </authorList>
    </citation>
    <scope>PROTEIN SEQUENCE</scope>
    <scope>FUNCTION</scope>
    <scope>SUBCELLULAR LOCATION</scope>
</reference>
<reference key="2">
    <citation type="journal article" date="2012" name="Proc. R. Soc. B">
        <title>Neurotoxin localization to ectodermal gland cells uncovers an alternative mechanism of venom delivery in sea anemones.</title>
        <authorList>
            <person name="Moran Y."/>
            <person name="Genikhovich G."/>
            <person name="Gordon D."/>
            <person name="Wienkoop S."/>
            <person name="Zenkert C."/>
            <person name="Ozbek S."/>
            <person name="Technau U."/>
            <person name="Gurevitz M."/>
        </authorList>
    </citation>
    <scope>TISSUE SPECIFICITY</scope>
    <scope>DEVELOPMENTAL STAGE</scope>
</reference>
<reference key="3">
    <citation type="journal article" date="2012" name="Toxicon">
        <title>Development of a rational nomenclature for naming peptide and protein toxins from sea anemones.</title>
        <authorList>
            <person name="Oliveira J.S."/>
            <person name="Fuentes-Silva D."/>
            <person name="King G.F."/>
        </authorList>
    </citation>
    <scope>NOMENCLATURE</scope>
</reference>
<accession>P0C1F3</accession>
<feature type="chain" id="PRO_0000236027" description="Delta-actitoxin-Ael1d" evidence="3">
    <location>
        <begin position="1"/>
        <end position="47"/>
    </location>
</feature>
<feature type="disulfide bond" evidence="2">
    <location>
        <begin position="4"/>
        <end position="44"/>
    </location>
</feature>
<feature type="disulfide bond" evidence="2">
    <location>
        <begin position="6"/>
        <end position="34"/>
    </location>
</feature>
<feature type="disulfide bond" evidence="2">
    <location>
        <begin position="27"/>
        <end position="45"/>
    </location>
</feature>
<proteinExistence type="evidence at protein level"/>
<keyword id="KW-0123">Cardiotoxin</keyword>
<keyword id="KW-0903">Direct protein sequencing</keyword>
<keyword id="KW-1015">Disulfide bond</keyword>
<keyword id="KW-0872">Ion channel impairing toxin</keyword>
<keyword id="KW-0528">Neurotoxin</keyword>
<keyword id="KW-0964">Secreted</keyword>
<keyword id="KW-0800">Toxin</keyword>
<keyword id="KW-0738">Voltage-gated sodium channel impairing toxin</keyword>
<name>NA122_ANTEL</name>
<evidence type="ECO:0000250" key="1"/>
<evidence type="ECO:0000250" key="2">
    <source>
        <dbReference type="UniProtKB" id="P10454"/>
    </source>
</evidence>
<evidence type="ECO:0000269" key="3">
    <source>
    </source>
</evidence>
<evidence type="ECO:0000303" key="4">
    <source>
    </source>
</evidence>
<evidence type="ECO:0000303" key="5">
    <source>
    </source>
</evidence>
<evidence type="ECO:0000305" key="6"/>
<evidence type="ECO:0000305" key="7">
    <source>
    </source>
</evidence>
<organism>
    <name type="scientific">Anthopleura elegantissima</name>
    <name type="common">Green aggregating anemone</name>
    <name type="synonym">Actinia elegantissima</name>
    <dbReference type="NCBI Taxonomy" id="6110"/>
    <lineage>
        <taxon>Eukaryota</taxon>
        <taxon>Metazoa</taxon>
        <taxon>Cnidaria</taxon>
        <taxon>Anthozoa</taxon>
        <taxon>Hexacorallia</taxon>
        <taxon>Actiniaria</taxon>
        <taxon>Actiniidae</taxon>
        <taxon>Anthopleura</taxon>
    </lineage>
</organism>
<comment type="function">
    <text evidence="1 3">Modifies current passing through the fast sodium channel (Nav) in neuroblastoma cells, leading to delayed and incomplete inactivation. Produces a positive inotropic effect in mammalian heart muscle (By similarity). Paralyzes the shore crab (C.maenas) by tetanic contractions after intramuscular injection.</text>
</comment>
<comment type="subcellular location">
    <subcellularLocation>
        <location evidence="3">Secreted</location>
    </subcellularLocation>
</comment>
<comment type="tissue specificity">
    <text evidence="7">Expressed in ectodermal glands. Not expressed in nematocytes.</text>
</comment>
<comment type="similarity">
    <text evidence="6">Belongs to the sea anemone sodium channel inhibitory toxin family. Type I subfamily.</text>
</comment>
<sequence>GVPCLCDSDGPNVRGNTLSGILWLAGCPSGWHNCKAHGPTIGWCCKQ</sequence>